<name>Y1664_DICDI</name>
<keyword id="KW-0040">ANK repeat</keyword>
<keyword id="KW-0067">ATP-binding</keyword>
<keyword id="KW-0418">Kinase</keyword>
<keyword id="KW-0547">Nucleotide-binding</keyword>
<keyword id="KW-1185">Reference proteome</keyword>
<keyword id="KW-0677">Repeat</keyword>
<keyword id="KW-0723">Serine/threonine-protein kinase</keyword>
<keyword id="KW-0808">Transferase</keyword>
<comment type="catalytic activity">
    <reaction>
        <text>L-seryl-[protein] + ATP = O-phospho-L-seryl-[protein] + ADP + H(+)</text>
        <dbReference type="Rhea" id="RHEA:17989"/>
        <dbReference type="Rhea" id="RHEA-COMP:9863"/>
        <dbReference type="Rhea" id="RHEA-COMP:11604"/>
        <dbReference type="ChEBI" id="CHEBI:15378"/>
        <dbReference type="ChEBI" id="CHEBI:29999"/>
        <dbReference type="ChEBI" id="CHEBI:30616"/>
        <dbReference type="ChEBI" id="CHEBI:83421"/>
        <dbReference type="ChEBI" id="CHEBI:456216"/>
        <dbReference type="EC" id="2.7.11.1"/>
    </reaction>
</comment>
<comment type="catalytic activity">
    <reaction>
        <text>L-threonyl-[protein] + ATP = O-phospho-L-threonyl-[protein] + ADP + H(+)</text>
        <dbReference type="Rhea" id="RHEA:46608"/>
        <dbReference type="Rhea" id="RHEA-COMP:11060"/>
        <dbReference type="Rhea" id="RHEA-COMP:11605"/>
        <dbReference type="ChEBI" id="CHEBI:15378"/>
        <dbReference type="ChEBI" id="CHEBI:30013"/>
        <dbReference type="ChEBI" id="CHEBI:30616"/>
        <dbReference type="ChEBI" id="CHEBI:61977"/>
        <dbReference type="ChEBI" id="CHEBI:456216"/>
        <dbReference type="EC" id="2.7.11.1"/>
    </reaction>
</comment>
<comment type="similarity">
    <text evidence="1">Belongs to the protein kinase superfamily. Ser/Thr protein kinase family.</text>
</comment>
<reference key="1">
    <citation type="journal article" date="2005" name="Nature">
        <title>The genome of the social amoeba Dictyostelium discoideum.</title>
        <authorList>
            <person name="Eichinger L."/>
            <person name="Pachebat J.A."/>
            <person name="Gloeckner G."/>
            <person name="Rajandream M.A."/>
            <person name="Sucgang R."/>
            <person name="Berriman M."/>
            <person name="Song J."/>
            <person name="Olsen R."/>
            <person name="Szafranski K."/>
            <person name="Xu Q."/>
            <person name="Tunggal B."/>
            <person name="Kummerfeld S."/>
            <person name="Madera M."/>
            <person name="Konfortov B.A."/>
            <person name="Rivero F."/>
            <person name="Bankier A.T."/>
            <person name="Lehmann R."/>
            <person name="Hamlin N."/>
            <person name="Davies R."/>
            <person name="Gaudet P."/>
            <person name="Fey P."/>
            <person name="Pilcher K."/>
            <person name="Chen G."/>
            <person name="Saunders D."/>
            <person name="Sodergren E.J."/>
            <person name="Davis P."/>
            <person name="Kerhornou A."/>
            <person name="Nie X."/>
            <person name="Hall N."/>
            <person name="Anjard C."/>
            <person name="Hemphill L."/>
            <person name="Bason N."/>
            <person name="Farbrother P."/>
            <person name="Desany B."/>
            <person name="Just E."/>
            <person name="Morio T."/>
            <person name="Rost R."/>
            <person name="Churcher C.M."/>
            <person name="Cooper J."/>
            <person name="Haydock S."/>
            <person name="van Driessche N."/>
            <person name="Cronin A."/>
            <person name="Goodhead I."/>
            <person name="Muzny D.M."/>
            <person name="Mourier T."/>
            <person name="Pain A."/>
            <person name="Lu M."/>
            <person name="Harper D."/>
            <person name="Lindsay R."/>
            <person name="Hauser H."/>
            <person name="James K.D."/>
            <person name="Quiles M."/>
            <person name="Madan Babu M."/>
            <person name="Saito T."/>
            <person name="Buchrieser C."/>
            <person name="Wardroper A."/>
            <person name="Felder M."/>
            <person name="Thangavelu M."/>
            <person name="Johnson D."/>
            <person name="Knights A."/>
            <person name="Loulseged H."/>
            <person name="Mungall K.L."/>
            <person name="Oliver K."/>
            <person name="Price C."/>
            <person name="Quail M.A."/>
            <person name="Urushihara H."/>
            <person name="Hernandez J."/>
            <person name="Rabbinowitsch E."/>
            <person name="Steffen D."/>
            <person name="Sanders M."/>
            <person name="Ma J."/>
            <person name="Kohara Y."/>
            <person name="Sharp S."/>
            <person name="Simmonds M.N."/>
            <person name="Spiegler S."/>
            <person name="Tivey A."/>
            <person name="Sugano S."/>
            <person name="White B."/>
            <person name="Walker D."/>
            <person name="Woodward J.R."/>
            <person name="Winckler T."/>
            <person name="Tanaka Y."/>
            <person name="Shaulsky G."/>
            <person name="Schleicher M."/>
            <person name="Weinstock G.M."/>
            <person name="Rosenthal A."/>
            <person name="Cox E.C."/>
            <person name="Chisholm R.L."/>
            <person name="Gibbs R.A."/>
            <person name="Loomis W.F."/>
            <person name="Platzer M."/>
            <person name="Kay R.R."/>
            <person name="Williams J.G."/>
            <person name="Dear P.H."/>
            <person name="Noegel A.A."/>
            <person name="Barrell B.G."/>
            <person name="Kuspa A."/>
        </authorList>
    </citation>
    <scope>NUCLEOTIDE SEQUENCE [LARGE SCALE GENOMIC DNA]</scope>
    <source>
        <strain>AX4</strain>
    </source>
</reference>
<proteinExistence type="inferred from homology"/>
<sequence>MESKKNSYYKNVMDKIYAKEKDVLSINKDFQENNLTRISLILNYKDFYLKFDESLHGYSFGYVTNLFGLKLYSPFTETVRFDDTEKYMKTILGVPSNEALPQLCSDQHQNFEEKDPQIEILPSPQQQQQQQQQQQQQQQQQQQQQQQQQQQQQQQQQQQQLTPPPSPPLLPIPQPPAQNEEQQLTQPPSIPPPQQKQIKIQKSDRGTQVKSITNPVNSLSKYINNSSLDYSIKKNYTLEEIYENNKNYMDKTNNFLHFLFTFIDKTTIKDLEHFEKEISRVHNIEKLINEQNVKGETPLHSLILYNSESCLKKLVIAKINCMGIFDYSKCDNLNKNLLTHAIEKGDFEIIKLVLIGGCPLKMSPRSKLFKQNFKLYRQQIYRVFEIKEFLTELGFNQFIPMFLEYEFKNINIYYQIKSFIMVLTLNADEILRWKSLLEPNKNLDLDSFCIEYQIKDQNGSESQLMADHFKKVCQLNSLFGYIDFHTQIGSAGNASVFEGTYKGMPIACKEMPVSGTYEQRVDSIKEIAAVGQIEDLGGCTVVKTVGVLKYNEKLFLVMVKEKCNLLSFLSNKSEILKMQRGGIWTSIFKISKEILKGLISLREVGMYHRDFKTANFLVSNTGKILISDFGTSRDENEKRFNTFAKTIGTLWYRCPRLGDCSGDEKTLNHYNEKSEIYSLGIILWELICIAMTGTYVSPKIALFQNEVDFSIWIHKDYRFSFPIGTPQSLVKLITSMCLPCRDRRPTVHQILDEVGIIETEFLSNRGIKGEQTYSGLECWREFNFSKQNVFGISISNLHDTEYKAVNKYNYTSYNNKNSLLMKRYLDNSNFVVELINPNGIFKFKSFFEKEKLLYLKLKSTYKGEYYFDMGKFLTTIIQIHQITEIYYKMLQKYRELGLLRNNNNNINNNNNNNNNCNNSKKFKTTSESTSALGSDASSSSSPSSSSPSPKYSASIYHHQ</sequence>
<protein>
    <recommendedName>
        <fullName>Probable serine/threonine-protein kinase DDB_G0291664</fullName>
        <ecNumber>2.7.11.1</ecNumber>
    </recommendedName>
</protein>
<dbReference type="EC" id="2.7.11.1"/>
<dbReference type="EMBL" id="AAFI02000177">
    <property type="protein sequence ID" value="EAL61816.1"/>
    <property type="molecule type" value="Genomic_DNA"/>
</dbReference>
<dbReference type="RefSeq" id="XP_635219.1">
    <property type="nucleotide sequence ID" value="XM_630127.1"/>
</dbReference>
<dbReference type="SMR" id="Q54EM1"/>
<dbReference type="STRING" id="44689.Q54EM1"/>
<dbReference type="PaxDb" id="44689-DDB0229339"/>
<dbReference type="EnsemblProtists" id="EAL61816">
    <property type="protein sequence ID" value="EAL61816"/>
    <property type="gene ID" value="DDB_G0291664"/>
</dbReference>
<dbReference type="GeneID" id="8628166"/>
<dbReference type="KEGG" id="ddi:DDB_G0291664"/>
<dbReference type="dictyBase" id="DDB_G0291664"/>
<dbReference type="VEuPathDB" id="AmoebaDB:DDB_G0291664"/>
<dbReference type="eggNOG" id="KOG4721">
    <property type="taxonomic scope" value="Eukaryota"/>
</dbReference>
<dbReference type="HOGENOM" id="CLU_306845_0_0_1"/>
<dbReference type="InParanoid" id="Q54EM1"/>
<dbReference type="PhylomeDB" id="Q54EM1"/>
<dbReference type="Reactome" id="R-DDI-5673000">
    <property type="pathway name" value="RAF activation"/>
</dbReference>
<dbReference type="Reactome" id="R-DDI-5675221">
    <property type="pathway name" value="Negative regulation of MAPK pathway"/>
</dbReference>
<dbReference type="PRO" id="PR:Q54EM1"/>
<dbReference type="Proteomes" id="UP000002195">
    <property type="component" value="Chromosome 6"/>
</dbReference>
<dbReference type="GO" id="GO:0005737">
    <property type="term" value="C:cytoplasm"/>
    <property type="evidence" value="ECO:0000318"/>
    <property type="project" value="GO_Central"/>
</dbReference>
<dbReference type="GO" id="GO:0005524">
    <property type="term" value="F:ATP binding"/>
    <property type="evidence" value="ECO:0007669"/>
    <property type="project" value="UniProtKB-KW"/>
</dbReference>
<dbReference type="GO" id="GO:0004672">
    <property type="term" value="F:protein kinase activity"/>
    <property type="evidence" value="ECO:0000318"/>
    <property type="project" value="GO_Central"/>
</dbReference>
<dbReference type="GO" id="GO:0106310">
    <property type="term" value="F:protein serine kinase activity"/>
    <property type="evidence" value="ECO:0007669"/>
    <property type="project" value="RHEA"/>
</dbReference>
<dbReference type="GO" id="GO:0004674">
    <property type="term" value="F:protein serine/threonine kinase activity"/>
    <property type="evidence" value="ECO:0007669"/>
    <property type="project" value="UniProtKB-KW"/>
</dbReference>
<dbReference type="GO" id="GO:0007165">
    <property type="term" value="P:signal transduction"/>
    <property type="evidence" value="ECO:0000318"/>
    <property type="project" value="GO_Central"/>
</dbReference>
<dbReference type="CDD" id="cd00180">
    <property type="entry name" value="PKc"/>
    <property type="match status" value="1"/>
</dbReference>
<dbReference type="Gene3D" id="1.25.40.20">
    <property type="entry name" value="Ankyrin repeat-containing domain"/>
    <property type="match status" value="1"/>
</dbReference>
<dbReference type="Gene3D" id="1.10.510.10">
    <property type="entry name" value="Transferase(Phosphotransferase) domain 1"/>
    <property type="match status" value="1"/>
</dbReference>
<dbReference type="InterPro" id="IPR036770">
    <property type="entry name" value="Ankyrin_rpt-contain_sf"/>
</dbReference>
<dbReference type="InterPro" id="IPR011009">
    <property type="entry name" value="Kinase-like_dom_sf"/>
</dbReference>
<dbReference type="InterPro" id="IPR000719">
    <property type="entry name" value="Prot_kinase_dom"/>
</dbReference>
<dbReference type="InterPro" id="IPR008271">
    <property type="entry name" value="Ser/Thr_kinase_AS"/>
</dbReference>
<dbReference type="InterPro" id="IPR051681">
    <property type="entry name" value="Ser/Thr_Kinases-Pseudokinases"/>
</dbReference>
<dbReference type="PANTHER" id="PTHR44329:SF288">
    <property type="entry name" value="MITOGEN-ACTIVATED PROTEIN KINASE KINASE KINASE 20"/>
    <property type="match status" value="1"/>
</dbReference>
<dbReference type="PANTHER" id="PTHR44329">
    <property type="entry name" value="SERINE/THREONINE-PROTEIN KINASE TNNI3K-RELATED"/>
    <property type="match status" value="1"/>
</dbReference>
<dbReference type="Pfam" id="PF00069">
    <property type="entry name" value="Pkinase"/>
    <property type="match status" value="1"/>
</dbReference>
<dbReference type="SUPFAM" id="SSF48403">
    <property type="entry name" value="Ankyrin repeat"/>
    <property type="match status" value="1"/>
</dbReference>
<dbReference type="SUPFAM" id="SSF81995">
    <property type="entry name" value="beta-sandwich domain of Sec23/24"/>
    <property type="match status" value="1"/>
</dbReference>
<dbReference type="SUPFAM" id="SSF56112">
    <property type="entry name" value="Protein kinase-like (PK-like)"/>
    <property type="match status" value="1"/>
</dbReference>
<dbReference type="PROSITE" id="PS50011">
    <property type="entry name" value="PROTEIN_KINASE_DOM"/>
    <property type="match status" value="1"/>
</dbReference>
<dbReference type="PROSITE" id="PS00108">
    <property type="entry name" value="PROTEIN_KINASE_ST"/>
    <property type="match status" value="1"/>
</dbReference>
<evidence type="ECO:0000255" key="1">
    <source>
        <dbReference type="PROSITE-ProRule" id="PRU00159"/>
    </source>
</evidence>
<evidence type="ECO:0000255" key="2">
    <source>
        <dbReference type="PROSITE-ProRule" id="PRU10027"/>
    </source>
</evidence>
<evidence type="ECO:0000256" key="3">
    <source>
        <dbReference type="SAM" id="MobiDB-lite"/>
    </source>
</evidence>
<accession>Q54EM1</accession>
<gene>
    <name type="ORF">DDB_G0291664</name>
</gene>
<feature type="chain" id="PRO_0000362044" description="Probable serine/threonine-protein kinase DDB_G0291664">
    <location>
        <begin position="1"/>
        <end position="959"/>
    </location>
</feature>
<feature type="repeat" description="ANK 1">
    <location>
        <begin position="294"/>
        <end position="324"/>
    </location>
</feature>
<feature type="repeat" description="ANK 2">
    <location>
        <begin position="333"/>
        <end position="362"/>
    </location>
</feature>
<feature type="domain" description="Protein kinase" evidence="1">
    <location>
        <begin position="482"/>
        <end position="762"/>
    </location>
</feature>
<feature type="region of interest" description="Disordered" evidence="3">
    <location>
        <begin position="154"/>
        <end position="213"/>
    </location>
</feature>
<feature type="region of interest" description="Disordered" evidence="3">
    <location>
        <begin position="904"/>
        <end position="959"/>
    </location>
</feature>
<feature type="compositionally biased region" description="Pro residues" evidence="3">
    <location>
        <begin position="162"/>
        <end position="176"/>
    </location>
</feature>
<feature type="active site" description="Proton acceptor" evidence="1 2">
    <location>
        <position position="610"/>
    </location>
</feature>
<feature type="binding site" evidence="1">
    <location>
        <begin position="488"/>
        <end position="496"/>
    </location>
    <ligand>
        <name>ATP</name>
        <dbReference type="ChEBI" id="CHEBI:30616"/>
    </ligand>
</feature>
<feature type="binding site" evidence="1">
    <location>
        <position position="509"/>
    </location>
    <ligand>
        <name>ATP</name>
        <dbReference type="ChEBI" id="CHEBI:30616"/>
    </ligand>
</feature>
<organism>
    <name type="scientific">Dictyostelium discoideum</name>
    <name type="common">Social amoeba</name>
    <dbReference type="NCBI Taxonomy" id="44689"/>
    <lineage>
        <taxon>Eukaryota</taxon>
        <taxon>Amoebozoa</taxon>
        <taxon>Evosea</taxon>
        <taxon>Eumycetozoa</taxon>
        <taxon>Dictyostelia</taxon>
        <taxon>Dictyosteliales</taxon>
        <taxon>Dictyosteliaceae</taxon>
        <taxon>Dictyostelium</taxon>
    </lineage>
</organism>